<reference key="1">
    <citation type="submission" date="2005-06" db="EMBL/GenBank/DDBJ databases">
        <title>DNA sequences of macaque genes expressed in brain or testis and its evolutionary implications.</title>
        <authorList>
            <consortium name="International consortium for macaque cDNA sequencing and analysis"/>
        </authorList>
    </citation>
    <scope>NUCLEOTIDE SEQUENCE [LARGE SCALE MRNA]</scope>
    <source>
        <tissue>Testis</tissue>
    </source>
</reference>
<accession>Q4R648</accession>
<keyword id="KW-0472">Membrane</keyword>
<keyword id="KW-0496">Mitochondrion</keyword>
<keyword id="KW-0999">Mitochondrion inner membrane</keyword>
<keyword id="KW-1185">Reference proteome</keyword>
<keyword id="KW-0809">Transit peptide</keyword>
<keyword id="KW-0812">Transmembrane</keyword>
<keyword id="KW-1133">Transmembrane helix</keyword>
<protein>
    <recommendedName>
        <fullName>Cytochrome c oxidase subunit 7B2, mitochondrial</fullName>
    </recommendedName>
    <alternativeName>
        <fullName>Cytochrome c oxidase polypeptide VIIb2</fullName>
    </alternativeName>
</protein>
<name>CX7B2_MACFA</name>
<organism>
    <name type="scientific">Macaca fascicularis</name>
    <name type="common">Crab-eating macaque</name>
    <name type="synonym">Cynomolgus monkey</name>
    <dbReference type="NCBI Taxonomy" id="9541"/>
    <lineage>
        <taxon>Eukaryota</taxon>
        <taxon>Metazoa</taxon>
        <taxon>Chordata</taxon>
        <taxon>Craniata</taxon>
        <taxon>Vertebrata</taxon>
        <taxon>Euteleostomi</taxon>
        <taxon>Mammalia</taxon>
        <taxon>Eutheria</taxon>
        <taxon>Euarchontoglires</taxon>
        <taxon>Primates</taxon>
        <taxon>Haplorrhini</taxon>
        <taxon>Catarrhini</taxon>
        <taxon>Cercopithecidae</taxon>
        <taxon>Cercopithecinae</taxon>
        <taxon>Macaca</taxon>
    </lineage>
</organism>
<gene>
    <name type="primary">COX7B2</name>
    <name type="ORF">QtsA-19150</name>
</gene>
<proteinExistence type="inferred from homology"/>
<evidence type="ECO:0000250" key="1">
    <source>
        <dbReference type="UniProtKB" id="P13183"/>
    </source>
</evidence>
<evidence type="ECO:0000305" key="2"/>
<dbReference type="EMBL" id="AB169342">
    <property type="protein sequence ID" value="BAE01427.1"/>
    <property type="molecule type" value="mRNA"/>
</dbReference>
<dbReference type="RefSeq" id="XP_005554869.1">
    <property type="nucleotide sequence ID" value="XM_005554812.2"/>
</dbReference>
<dbReference type="STRING" id="9541.ENSMFAP00000010952"/>
<dbReference type="GeneID" id="102123270"/>
<dbReference type="VEuPathDB" id="HostDB:ENSMFAG00000011893"/>
<dbReference type="eggNOG" id="ENOG502S9DG">
    <property type="taxonomic scope" value="Eukaryota"/>
</dbReference>
<dbReference type="OMA" id="QIRARQS"/>
<dbReference type="UniPathway" id="UPA00705"/>
<dbReference type="Proteomes" id="UP000233100">
    <property type="component" value="Chromosome 5"/>
</dbReference>
<dbReference type="GO" id="GO:0005743">
    <property type="term" value="C:mitochondrial inner membrane"/>
    <property type="evidence" value="ECO:0007669"/>
    <property type="project" value="UniProtKB-SubCell"/>
</dbReference>
<dbReference type="GO" id="GO:0045277">
    <property type="term" value="C:respiratory chain complex IV"/>
    <property type="evidence" value="ECO:0007669"/>
    <property type="project" value="TreeGrafter"/>
</dbReference>
<dbReference type="GO" id="GO:0006123">
    <property type="term" value="P:mitochondrial electron transport, cytochrome c to oxygen"/>
    <property type="evidence" value="ECO:0007669"/>
    <property type="project" value="InterPro"/>
</dbReference>
<dbReference type="CDD" id="cd01403">
    <property type="entry name" value="Cyt_c_Oxidase_VIIb"/>
    <property type="match status" value="1"/>
</dbReference>
<dbReference type="FunFam" id="4.10.51.10:FF:000001">
    <property type="entry name" value="Cytochrome c oxidase subunit 7B, mitochondrial"/>
    <property type="match status" value="1"/>
</dbReference>
<dbReference type="Gene3D" id="4.10.51.10">
    <property type="entry name" value="Cytochrome C Oxidase, chain K"/>
    <property type="match status" value="1"/>
</dbReference>
<dbReference type="InterPro" id="IPR008433">
    <property type="entry name" value="Cyt_c_oxidase_suVIIB"/>
</dbReference>
<dbReference type="InterPro" id="IPR023272">
    <property type="entry name" value="Cyt_c_oxidase_suVIIB_dom_sf"/>
</dbReference>
<dbReference type="PANTHER" id="PTHR16716">
    <property type="entry name" value="CYTOCHROME C OXIDASE SUBUNIT 7B, MITOCHONDRIAL"/>
    <property type="match status" value="1"/>
</dbReference>
<dbReference type="PANTHER" id="PTHR16716:SF1">
    <property type="entry name" value="CYTOCHROME C OXIDASE SUBUNIT 7B2, MITOCHONDRIAL"/>
    <property type="match status" value="1"/>
</dbReference>
<dbReference type="Pfam" id="PF05392">
    <property type="entry name" value="COX7B"/>
    <property type="match status" value="1"/>
</dbReference>
<dbReference type="SUPFAM" id="SSF81423">
    <property type="entry name" value="Mitochondrial cytochrome c oxidase subunit VIIb"/>
    <property type="match status" value="1"/>
</dbReference>
<comment type="function">
    <text evidence="1">Component of the cytochrome c oxidase, the last enzyme in the mitochondrial electron transport chain which drives oxidative phosphorylation. The respiratory chain contains 3 multisubunit complexes succinate dehydrogenase (complex II, CII), ubiquinol-cytochrome c oxidoreductase (cytochrome b-c1 complex, complex III, CIII) and cytochrome c oxidase (complex IV, CIV), that cooperate to transfer electrons derived from NADH and succinate to molecular oxygen, creating an electrochemical gradient over the inner membrane that drives transmembrane transport and the ATP synthase. Cytochrome c oxidase is the component of the respiratory chain that catalyzes the reduction of oxygen to water. Electrons originating from reduced cytochrome c in the intermembrane space (IMS) are transferred via the dinuclear copper A center (CU(A)) of subunit 2 and heme A of subunit 1 to the active site in subunit 1, a binuclear center (BNC) formed by heme A3 and copper B (CU(B)). The BNC reduces molecular oxygen to 2 water molecules using 4 electrons from cytochrome c in the IMS and 4 protons from the mitochondrial matrix.</text>
</comment>
<comment type="pathway">
    <text evidence="1">Energy metabolism; oxidative phosphorylation.</text>
</comment>
<comment type="subunit">
    <text evidence="1">Component of the cytochrome c oxidase (complex IV, CIV), a multisubunit enzyme composed of 14 subunits. The complex is composed of a catalytic core of 3 subunits MT-CO1, MT-CO2 and MT-CO3, encoded in the mitochondrial DNA, and 11 supernumerary subunits COX4I, COX5A, COX5B, COX6A, COX6B, COX6C, COX7A, COX7B, COX7C, COX8 and NDUFA4, which are encoded in the nuclear genome. The complex exists as a monomer or a dimer and forms supercomplexes (SCs) in the inner mitochondrial membrane with NADH-ubiquinone oxidoreductase (complex I, CI) and ubiquinol-cytochrome c oxidoreductase (cytochrome b-c1 complex, complex III, CIII), resulting in different assemblies (supercomplex SCI(1)III(2)IV(1) and megacomplex MCI(2)III(2)IV(2)).</text>
</comment>
<comment type="subcellular location">
    <subcellularLocation>
        <location evidence="1">Mitochondrion inner membrane</location>
        <topology evidence="1">Single-pass membrane protein</topology>
    </subcellularLocation>
</comment>
<comment type="similarity">
    <text evidence="2">Belongs to the cytochrome c oxidase VIIb family.</text>
</comment>
<feature type="transit peptide" description="Mitochondrion" evidence="1">
    <location>
        <begin position="1"/>
        <end position="25"/>
    </location>
</feature>
<feature type="chain" id="PRO_0000372604" description="Cytochrome c oxidase subunit 7B2, mitochondrial">
    <location>
        <begin position="26"/>
        <end position="81"/>
    </location>
</feature>
<feature type="topological domain" description="Mitochondrial matrix" evidence="1">
    <location>
        <begin position="26"/>
        <end position="33"/>
    </location>
</feature>
<feature type="transmembrane region" description="Helical" evidence="1">
    <location>
        <begin position="34"/>
        <end position="60"/>
    </location>
</feature>
<feature type="topological domain" description="Mitochondrial intermembrane" evidence="1">
    <location>
        <begin position="61"/>
        <end position="81"/>
    </location>
</feature>
<sequence>MMFPLARNALSSLKIRSILQSMARQSHVKHSPDFHDKYGNAVLASGTAFCVVAWVFTATQIGIEWNLSPVGRVTPKEWKHQ</sequence>